<keyword id="KW-1003">Cell membrane</keyword>
<keyword id="KW-0210">Decarboxylase</keyword>
<keyword id="KW-0444">Lipid biosynthesis</keyword>
<keyword id="KW-0443">Lipid metabolism</keyword>
<keyword id="KW-0456">Lyase</keyword>
<keyword id="KW-0472">Membrane</keyword>
<keyword id="KW-0594">Phospholipid biosynthesis</keyword>
<keyword id="KW-1208">Phospholipid metabolism</keyword>
<keyword id="KW-0670">Pyruvate</keyword>
<keyword id="KW-0865">Zymogen</keyword>
<comment type="function">
    <text evidence="1">Catalyzes the formation of archaetidylethanolamine (PtdEtn) from archaetidylserine (PtdSer).</text>
</comment>
<comment type="catalytic activity">
    <reaction evidence="1">
        <text>archaetidylserine + H(+) = archaetidylethanolamine + CO2</text>
        <dbReference type="Rhea" id="RHEA:51488"/>
        <dbReference type="ChEBI" id="CHEBI:15378"/>
        <dbReference type="ChEBI" id="CHEBI:16526"/>
        <dbReference type="ChEBI" id="CHEBI:71517"/>
        <dbReference type="ChEBI" id="CHEBI:134176"/>
    </reaction>
</comment>
<comment type="cofactor">
    <cofactor evidence="1">
        <name>pyruvate</name>
        <dbReference type="ChEBI" id="CHEBI:15361"/>
    </cofactor>
    <text evidence="1">Binds 1 pyruvoyl group covalently per subunit.</text>
</comment>
<comment type="subunit">
    <text evidence="1">Heterodimer of a large membrane-associated beta subunit and a small pyruvoyl-containing alpha subunit.</text>
</comment>
<comment type="subcellular location">
    <subcellularLocation>
        <location evidence="1">Cell membrane</location>
        <topology evidence="1">Peripheral membrane protein</topology>
    </subcellularLocation>
</comment>
<comment type="PTM">
    <text evidence="1">Is synthesized initially as an inactive proenzyme. Formation of the active enzyme involves a self-maturation process in which the active site pyruvoyl group is generated from an internal serine residue via an autocatalytic post-translational modification. Two non-identical subunits are generated from the proenzyme in this reaction, and the pyruvate is formed at the N-terminus of the alpha chain, which is derived from the carboxyl end of the proenzyme. The post-translation cleavage follows an unusual pathway, termed non-hydrolytic serinolysis, in which the side chain hydroxyl group of the serine supplies its oxygen atom to form the C-terminus of the beta chain, while the remainder of the serine residue undergoes an oxidative deamination to produce ammonia and the pyruvoyl prosthetic group on the alpha chain.</text>
</comment>
<comment type="similarity">
    <text evidence="1">Belongs to the phosphatidylserine decarboxylase family. PSD-A subfamily.</text>
</comment>
<sequence>MIAKGSEPWLFTAASVTALFAILSRATDGLPFLNYIANVGMALTFVMVIFFRDPERKVETSDTYMISPADGTVIDIRDRKICIFMFLQNVHVNRAPISGKISEIIYKKGGYLPAFCKDSERNERNEFIIHSKYGDVRVTQIAGIIARRIVTYSNVNDTVEQGQRIGMIRFGSRVDVTIPHDFDITVEKGERVLAGKTIIATIKNDRDF</sequence>
<protein>
    <recommendedName>
        <fullName evidence="1">Putative archaetidylserine decarboxylase proenzyme</fullName>
        <ecNumber evidence="1">4.1.1.-</ecNumber>
    </recommendedName>
    <component>
        <recommendedName>
            <fullName evidence="1">Archaetidylserine decarboxylase alpha chain</fullName>
        </recommendedName>
    </component>
    <component>
        <recommendedName>
            <fullName evidence="1">Archaetidylserine decarboxylase beta chain</fullName>
        </recommendedName>
    </component>
</protein>
<feature type="chain" id="PRO_0000029829" description="Archaetidylserine decarboxylase beta chain" evidence="1">
    <location>
        <begin position="1"/>
        <end position="171"/>
    </location>
</feature>
<feature type="chain" id="PRO_0000029830" description="Archaetidylserine decarboxylase alpha chain" evidence="1">
    <location>
        <begin position="172"/>
        <end position="208"/>
    </location>
</feature>
<feature type="active site" description="Schiff-base intermediate with substrate; via pyruvic acid" evidence="1">
    <location>
        <position position="172"/>
    </location>
</feature>
<feature type="site" description="Cleavage (non-hydrolytic); by autocatalysis" evidence="1">
    <location>
        <begin position="171"/>
        <end position="172"/>
    </location>
</feature>
<feature type="modified residue" description="Pyruvic acid (Ser); by autocatalysis" evidence="1">
    <location>
        <position position="172"/>
    </location>
</feature>
<name>ASD_METMA</name>
<reference key="1">
    <citation type="journal article" date="2002" name="J. Mol. Microbiol. Biotechnol.">
        <title>The genome of Methanosarcina mazei: evidence for lateral gene transfer between Bacteria and Archaea.</title>
        <authorList>
            <person name="Deppenmeier U."/>
            <person name="Johann A."/>
            <person name="Hartsch T."/>
            <person name="Merkl R."/>
            <person name="Schmitz R.A."/>
            <person name="Martinez-Arias R."/>
            <person name="Henne A."/>
            <person name="Wiezer A."/>
            <person name="Baeumer S."/>
            <person name="Jacobi C."/>
            <person name="Brueggemann H."/>
            <person name="Lienard T."/>
            <person name="Christmann A."/>
            <person name="Boemecke M."/>
            <person name="Steckel S."/>
            <person name="Bhattacharyya A."/>
            <person name="Lykidis A."/>
            <person name="Overbeek R."/>
            <person name="Klenk H.-P."/>
            <person name="Gunsalus R.P."/>
            <person name="Fritz H.-J."/>
            <person name="Gottschalk G."/>
        </authorList>
    </citation>
    <scope>NUCLEOTIDE SEQUENCE [LARGE SCALE GENOMIC DNA]</scope>
    <source>
        <strain>ATCC BAA-159 / DSM 3647 / Goe1 / Go1 / JCM 11833 / OCM 88</strain>
    </source>
</reference>
<organism>
    <name type="scientific">Methanosarcina mazei (strain ATCC BAA-159 / DSM 3647 / Goe1 / Go1 / JCM 11833 / OCM 88)</name>
    <name type="common">Methanosarcina frisia</name>
    <dbReference type="NCBI Taxonomy" id="192952"/>
    <lineage>
        <taxon>Archaea</taxon>
        <taxon>Methanobacteriati</taxon>
        <taxon>Methanobacteriota</taxon>
        <taxon>Stenosarchaea group</taxon>
        <taxon>Methanomicrobia</taxon>
        <taxon>Methanosarcinales</taxon>
        <taxon>Methanosarcinaceae</taxon>
        <taxon>Methanosarcina</taxon>
    </lineage>
</organism>
<dbReference type="EC" id="4.1.1.-" evidence="1"/>
<dbReference type="EMBL" id="AE008384">
    <property type="protein sequence ID" value="AAM31098.1"/>
    <property type="molecule type" value="Genomic_DNA"/>
</dbReference>
<dbReference type="RefSeq" id="WP_011033348.1">
    <property type="nucleotide sequence ID" value="NC_003901.1"/>
</dbReference>
<dbReference type="SMR" id="Q8PX20"/>
<dbReference type="KEGG" id="mma:MM_1402"/>
<dbReference type="PATRIC" id="fig|192952.21.peg.1624"/>
<dbReference type="eggNOG" id="arCOG04470">
    <property type="taxonomic scope" value="Archaea"/>
</dbReference>
<dbReference type="HOGENOM" id="CLU_072492_1_0_2"/>
<dbReference type="Proteomes" id="UP000000595">
    <property type="component" value="Chromosome"/>
</dbReference>
<dbReference type="GO" id="GO:0005886">
    <property type="term" value="C:plasma membrane"/>
    <property type="evidence" value="ECO:0007669"/>
    <property type="project" value="UniProtKB-SubCell"/>
</dbReference>
<dbReference type="GO" id="GO:0004609">
    <property type="term" value="F:phosphatidylserine decarboxylase activity"/>
    <property type="evidence" value="ECO:0007669"/>
    <property type="project" value="InterPro"/>
</dbReference>
<dbReference type="GO" id="GO:0008654">
    <property type="term" value="P:phospholipid biosynthetic process"/>
    <property type="evidence" value="ECO:0007669"/>
    <property type="project" value="UniProtKB-UniRule"/>
</dbReference>
<dbReference type="HAMAP" id="MF_00664">
    <property type="entry name" value="PS_decarb_PSD_A"/>
    <property type="match status" value="1"/>
</dbReference>
<dbReference type="InterPro" id="IPR003817">
    <property type="entry name" value="PS_Dcarbxylase"/>
</dbReference>
<dbReference type="InterPro" id="IPR033175">
    <property type="entry name" value="PSD-A"/>
</dbReference>
<dbReference type="NCBIfam" id="NF003685">
    <property type="entry name" value="PRK05305.2-5"/>
    <property type="match status" value="1"/>
</dbReference>
<dbReference type="PANTHER" id="PTHR35809">
    <property type="entry name" value="ARCHAETIDYLSERINE DECARBOXYLASE PROENZYME-RELATED"/>
    <property type="match status" value="1"/>
</dbReference>
<dbReference type="PANTHER" id="PTHR35809:SF1">
    <property type="entry name" value="ARCHAETIDYLSERINE DECARBOXYLASE PROENZYME-RELATED"/>
    <property type="match status" value="1"/>
</dbReference>
<dbReference type="Pfam" id="PF02666">
    <property type="entry name" value="PS_Dcarbxylase"/>
    <property type="match status" value="1"/>
</dbReference>
<accession>Q8PX20</accession>
<evidence type="ECO:0000255" key="1">
    <source>
        <dbReference type="HAMAP-Rule" id="MF_00664"/>
    </source>
</evidence>
<proteinExistence type="inferred from homology"/>
<gene>
    <name evidence="1" type="primary">asd</name>
    <name type="ordered locus">MM_1402</name>
</gene>